<organism>
    <name type="scientific">Pan troglodytes</name>
    <name type="common">Chimpanzee</name>
    <dbReference type="NCBI Taxonomy" id="9598"/>
    <lineage>
        <taxon>Eukaryota</taxon>
        <taxon>Metazoa</taxon>
        <taxon>Chordata</taxon>
        <taxon>Craniata</taxon>
        <taxon>Vertebrata</taxon>
        <taxon>Euteleostomi</taxon>
        <taxon>Mammalia</taxon>
        <taxon>Eutheria</taxon>
        <taxon>Euarchontoglires</taxon>
        <taxon>Primates</taxon>
        <taxon>Haplorrhini</taxon>
        <taxon>Catarrhini</taxon>
        <taxon>Hominidae</taxon>
        <taxon>Pan</taxon>
    </lineage>
</organism>
<reference key="1">
    <citation type="journal article" date="2000" name="J. Med. Primatol.">
        <title>Expression of beta-defensin-1 in chimpanzee (Pan troglodytes) airways.</title>
        <authorList>
            <person name="Duits L.A."/>
            <person name="Langermans J.A.M."/>
            <person name="Paltansing S."/>
            <person name="van der Straaten T."/>
            <person name="Vervenne R.A.W."/>
            <person name="Frost P.A."/>
            <person name="Hiemstra P.S."/>
            <person name="Thomas A.W."/>
            <person name="Nibbering P.H."/>
        </authorList>
    </citation>
    <scope>NUCLEOTIDE SEQUENCE [MRNA]</scope>
</reference>
<reference key="2">
    <citation type="journal article" date="2002" name="Immunogenetics">
        <title>Beta-defensin 1 gene variability among non-human primates.</title>
        <authorList>
            <person name="Del Pero M."/>
            <person name="Boniotto M."/>
            <person name="Zuccon D."/>
            <person name="Cervella P."/>
            <person name="Spano A."/>
            <person name="Amoroso A."/>
            <person name="Crovella S."/>
        </authorList>
    </citation>
    <scope>NUCLEOTIDE SEQUENCE [GENOMIC DNA]</scope>
</reference>
<reference key="3">
    <citation type="submission" date="2006-11" db="EMBL/GenBank/DDBJ databases">
        <title>Evolution and sequence variation of human beta-defensin genes.</title>
        <authorList>
            <person name="Hollox E.J."/>
            <person name="Armour J.A.L."/>
        </authorList>
    </citation>
    <scope>NUCLEOTIDE SEQUENCE [GENOMIC DNA]</scope>
</reference>
<evidence type="ECO:0000250" key="1"/>
<evidence type="ECO:0000250" key="2">
    <source>
        <dbReference type="UniProtKB" id="P60022"/>
    </source>
</evidence>
<evidence type="ECO:0000255" key="3"/>
<evidence type="ECO:0000305" key="4"/>
<dbReference type="EMBL" id="AF188607">
    <property type="protein sequence ID" value="AAF04110.1"/>
    <property type="molecule type" value="mRNA"/>
</dbReference>
<dbReference type="EMBL" id="AY033749">
    <property type="protein sequence ID" value="AAK61462.1"/>
    <property type="molecule type" value="Genomic_DNA"/>
</dbReference>
<dbReference type="EMBL" id="AY033735">
    <property type="protein sequence ID" value="AAK61462.1"/>
    <property type="status" value="JOINED"/>
    <property type="molecule type" value="Genomic_DNA"/>
</dbReference>
<dbReference type="EMBL" id="AM410097">
    <property type="protein sequence ID" value="CAL68980.1"/>
    <property type="molecule type" value="Genomic_DNA"/>
</dbReference>
<dbReference type="RefSeq" id="NP_001009151.1">
    <property type="nucleotide sequence ID" value="NM_001009151.1"/>
</dbReference>
<dbReference type="SMR" id="P60023"/>
<dbReference type="FunCoup" id="P60023">
    <property type="interactions" value="59"/>
</dbReference>
<dbReference type="STRING" id="9598.ENSPTRP00000034184"/>
<dbReference type="PaxDb" id="9598-ENSPTRP00000034184"/>
<dbReference type="Ensembl" id="ENSPTRT00000036989.3">
    <property type="protein sequence ID" value="ENSPTRP00000034184.2"/>
    <property type="gene ID" value="ENSPTRG00000019951.3"/>
</dbReference>
<dbReference type="GeneID" id="450100"/>
<dbReference type="KEGG" id="ptr:450100"/>
<dbReference type="CTD" id="1672"/>
<dbReference type="VGNC" id="VGNC:11964">
    <property type="gene designation" value="DEFB1"/>
</dbReference>
<dbReference type="eggNOG" id="ENOG502TDMV">
    <property type="taxonomic scope" value="Eukaryota"/>
</dbReference>
<dbReference type="GeneTree" id="ENSGT00390000017014"/>
<dbReference type="HOGENOM" id="CLU_189296_1_0_1"/>
<dbReference type="InParanoid" id="P60023"/>
<dbReference type="OMA" id="SGKAKCC"/>
<dbReference type="OrthoDB" id="10010at9604"/>
<dbReference type="Proteomes" id="UP000002277">
    <property type="component" value="Chromosome 8"/>
</dbReference>
<dbReference type="Bgee" id="ENSPTRG00000019951">
    <property type="expression patterns" value="Expressed in cortex of kidney and 17 other cell types or tissues"/>
</dbReference>
<dbReference type="GO" id="GO:0005615">
    <property type="term" value="C:extracellular space"/>
    <property type="evidence" value="ECO:0000318"/>
    <property type="project" value="GO_Central"/>
</dbReference>
<dbReference type="GO" id="GO:0016020">
    <property type="term" value="C:membrane"/>
    <property type="evidence" value="ECO:0000250"/>
    <property type="project" value="UniProtKB"/>
</dbReference>
<dbReference type="GO" id="GO:1990742">
    <property type="term" value="C:microvesicle"/>
    <property type="evidence" value="ECO:0000250"/>
    <property type="project" value="UniProtKB"/>
</dbReference>
<dbReference type="GO" id="GO:0097225">
    <property type="term" value="C:sperm midpiece"/>
    <property type="evidence" value="ECO:0000250"/>
    <property type="project" value="UniProtKB"/>
</dbReference>
<dbReference type="GO" id="GO:0031731">
    <property type="term" value="F:CCR6 chemokine receptor binding"/>
    <property type="evidence" value="ECO:0000250"/>
    <property type="project" value="UniProtKB"/>
</dbReference>
<dbReference type="GO" id="GO:0042802">
    <property type="term" value="F:identical protein binding"/>
    <property type="evidence" value="ECO:0000250"/>
    <property type="project" value="UniProtKB"/>
</dbReference>
<dbReference type="GO" id="GO:0019731">
    <property type="term" value="P:antibacterial humoral response"/>
    <property type="evidence" value="ECO:0007669"/>
    <property type="project" value="Ensembl"/>
</dbReference>
<dbReference type="GO" id="GO:0061844">
    <property type="term" value="P:antimicrobial humoral immune response mediated by antimicrobial peptide"/>
    <property type="evidence" value="ECO:0007669"/>
    <property type="project" value="Ensembl"/>
</dbReference>
<dbReference type="GO" id="GO:0019722">
    <property type="term" value="P:calcium-mediated signaling"/>
    <property type="evidence" value="ECO:0000250"/>
    <property type="project" value="UniProtKB"/>
</dbReference>
<dbReference type="GO" id="GO:0050829">
    <property type="term" value="P:defense response to Gram-negative bacterium"/>
    <property type="evidence" value="ECO:0000250"/>
    <property type="project" value="UniProtKB"/>
</dbReference>
<dbReference type="GO" id="GO:0050830">
    <property type="term" value="P:defense response to Gram-positive bacterium"/>
    <property type="evidence" value="ECO:0000250"/>
    <property type="project" value="UniProtKB"/>
</dbReference>
<dbReference type="GO" id="GO:0045087">
    <property type="term" value="P:innate immune response"/>
    <property type="evidence" value="ECO:0000250"/>
    <property type="project" value="UniProtKB"/>
</dbReference>
<dbReference type="GO" id="GO:0002227">
    <property type="term" value="P:innate immune response in mucosa"/>
    <property type="evidence" value="ECO:0000318"/>
    <property type="project" value="GO_Central"/>
</dbReference>
<dbReference type="GO" id="GO:0060474">
    <property type="term" value="P:positive regulation of flagellated sperm motility involved in capacitation"/>
    <property type="evidence" value="ECO:0000250"/>
    <property type="project" value="UniProtKB"/>
</dbReference>
<dbReference type="GO" id="GO:0009617">
    <property type="term" value="P:response to bacterium"/>
    <property type="evidence" value="ECO:0000250"/>
    <property type="project" value="UniProtKB"/>
</dbReference>
<dbReference type="FunFam" id="3.10.360.10:FF:000001">
    <property type="entry name" value="Beta-defensin 1"/>
    <property type="match status" value="1"/>
</dbReference>
<dbReference type="Gene3D" id="3.10.360.10">
    <property type="entry name" value="Antimicrobial Peptide, Beta-defensin 2, Chain A"/>
    <property type="match status" value="1"/>
</dbReference>
<dbReference type="InterPro" id="IPR001855">
    <property type="entry name" value="Defensin_beta-like"/>
</dbReference>
<dbReference type="PANTHER" id="PTHR21388:SF9">
    <property type="entry name" value="BETA-DEFENSIN 1"/>
    <property type="match status" value="1"/>
</dbReference>
<dbReference type="PANTHER" id="PTHR21388">
    <property type="entry name" value="BETA-DEFENSIN-RELATED"/>
    <property type="match status" value="1"/>
</dbReference>
<dbReference type="Pfam" id="PF00711">
    <property type="entry name" value="Defensin_beta"/>
    <property type="match status" value="1"/>
</dbReference>
<dbReference type="SUPFAM" id="SSF57392">
    <property type="entry name" value="Defensin-like"/>
    <property type="match status" value="1"/>
</dbReference>
<feature type="signal peptide" evidence="3">
    <location>
        <begin position="1"/>
        <end position="21"/>
    </location>
</feature>
<feature type="propeptide" id="PRO_0000006911" evidence="1">
    <location>
        <begin position="22"/>
        <end position="32"/>
    </location>
</feature>
<feature type="peptide" id="PRO_0000006912" description="Beta-defensin 1">
    <location>
        <begin position="33"/>
        <end position="68"/>
    </location>
</feature>
<feature type="disulfide bond" evidence="1">
    <location>
        <begin position="37"/>
        <end position="66"/>
    </location>
</feature>
<feature type="disulfide bond" evidence="1">
    <location>
        <begin position="44"/>
        <end position="59"/>
    </location>
</feature>
<feature type="disulfide bond" evidence="1">
    <location>
        <begin position="49"/>
        <end position="67"/>
    </location>
</feature>
<feature type="sequence conflict" description="In Ref. 1; AAF04110." evidence="4" ref="1">
    <original>G</original>
    <variation>R</variation>
    <location>
        <position position="61"/>
    </location>
</feature>
<name>DEFB1_PANTR</name>
<keyword id="KW-0044">Antibiotic</keyword>
<keyword id="KW-0929">Antimicrobial</keyword>
<keyword id="KW-0211">Defensin</keyword>
<keyword id="KW-1015">Disulfide bond</keyword>
<keyword id="KW-0472">Membrane</keyword>
<keyword id="KW-1185">Reference proteome</keyword>
<keyword id="KW-0964">Secreted</keyword>
<keyword id="KW-0732">Signal</keyword>
<comment type="function">
    <text evidence="2">Has bactericidal activity. May act as a ligand for C-C chemokine receptor CCR6. Positively regulates the sperm motility and bactericidal activity in a CCR6-dependent manner. Binds to CCR6 and triggers Ca2+ mobilization in the sperm which is important for its motility.</text>
</comment>
<comment type="subunit">
    <text evidence="2">Monomer. Homodimer.</text>
</comment>
<comment type="subcellular location">
    <subcellularLocation>
        <location evidence="2">Secreted</location>
    </subcellularLocation>
    <subcellularLocation>
        <location evidence="2">Membrane</location>
    </subcellularLocation>
    <text evidence="2">Associates with tumor cell membrane-derived microvesicles.</text>
</comment>
<comment type="similarity">
    <text evidence="4">Belongs to the beta-defensin family.</text>
</comment>
<gene>
    <name type="primary">DEFB1</name>
</gene>
<protein>
    <recommendedName>
        <fullName>Beta-defensin 1</fullName>
        <shortName>BD-1</shortName>
    </recommendedName>
    <alternativeName>
        <fullName>Defensin, beta 1</fullName>
    </alternativeName>
    <alternativeName>
        <fullName>cBD1</fullName>
    </alternativeName>
</protein>
<accession>P60023</accession>
<accession>A4H1Z2</accession>
<accession>Q09753</accession>
<accession>Q95M69</accession>
<sequence length="68" mass="7321">MRTSYLLLFTLCLLLSEMASGGNFLTGLGHRSDHYNCVSSGGQCLYSACPIFTKIQGTCYGGKAKCCK</sequence>
<proteinExistence type="inferred from homology"/>